<proteinExistence type="inferred from homology"/>
<feature type="chain" id="PRO_0000374897" description="Ribosomal protein uS12 methylthiotransferase RimO">
    <location>
        <begin position="1"/>
        <end position="437"/>
    </location>
</feature>
<feature type="domain" description="MTTase N-terminal" evidence="1">
    <location>
        <begin position="5"/>
        <end position="116"/>
    </location>
</feature>
<feature type="domain" description="Radical SAM core" evidence="2">
    <location>
        <begin position="140"/>
        <end position="369"/>
    </location>
</feature>
<feature type="domain" description="TRAM" evidence="1">
    <location>
        <begin position="372"/>
        <end position="437"/>
    </location>
</feature>
<feature type="binding site" evidence="1">
    <location>
        <position position="14"/>
    </location>
    <ligand>
        <name>[4Fe-4S] cluster</name>
        <dbReference type="ChEBI" id="CHEBI:49883"/>
        <label>1</label>
    </ligand>
</feature>
<feature type="binding site" evidence="1">
    <location>
        <position position="50"/>
    </location>
    <ligand>
        <name>[4Fe-4S] cluster</name>
        <dbReference type="ChEBI" id="CHEBI:49883"/>
        <label>1</label>
    </ligand>
</feature>
<feature type="binding site" evidence="1">
    <location>
        <position position="79"/>
    </location>
    <ligand>
        <name>[4Fe-4S] cluster</name>
        <dbReference type="ChEBI" id="CHEBI:49883"/>
        <label>1</label>
    </ligand>
</feature>
<feature type="binding site" evidence="1">
    <location>
        <position position="154"/>
    </location>
    <ligand>
        <name>[4Fe-4S] cluster</name>
        <dbReference type="ChEBI" id="CHEBI:49883"/>
        <label>2</label>
        <note>4Fe-4S-S-AdoMet</note>
    </ligand>
</feature>
<feature type="binding site" evidence="1">
    <location>
        <position position="158"/>
    </location>
    <ligand>
        <name>[4Fe-4S] cluster</name>
        <dbReference type="ChEBI" id="CHEBI:49883"/>
        <label>2</label>
        <note>4Fe-4S-S-AdoMet</note>
    </ligand>
</feature>
<feature type="binding site" evidence="1">
    <location>
        <position position="161"/>
    </location>
    <ligand>
        <name>[4Fe-4S] cluster</name>
        <dbReference type="ChEBI" id="CHEBI:49883"/>
        <label>2</label>
        <note>4Fe-4S-S-AdoMet</note>
    </ligand>
</feature>
<protein>
    <recommendedName>
        <fullName evidence="1">Ribosomal protein uS12 methylthiotransferase RimO</fullName>
        <shortName evidence="1">uS12 MTTase</shortName>
        <shortName evidence="1">uS12 methylthiotransferase</shortName>
        <ecNumber evidence="1">2.8.4.4</ecNumber>
    </recommendedName>
    <alternativeName>
        <fullName evidence="1">Ribosomal protein uS12 (aspartate-C(3))-methylthiotransferase</fullName>
    </alternativeName>
    <alternativeName>
        <fullName evidence="1">Ribosome maturation factor RimO</fullName>
    </alternativeName>
</protein>
<gene>
    <name evidence="1" type="primary">rimO</name>
    <name type="ordered locus">MAE_28950</name>
</gene>
<accession>B0JJS5</accession>
<keyword id="KW-0004">4Fe-4S</keyword>
<keyword id="KW-0963">Cytoplasm</keyword>
<keyword id="KW-0408">Iron</keyword>
<keyword id="KW-0411">Iron-sulfur</keyword>
<keyword id="KW-0479">Metal-binding</keyword>
<keyword id="KW-0949">S-adenosyl-L-methionine</keyword>
<keyword id="KW-0808">Transferase</keyword>
<organism>
    <name type="scientific">Microcystis aeruginosa (strain NIES-843 / IAM M-2473)</name>
    <dbReference type="NCBI Taxonomy" id="449447"/>
    <lineage>
        <taxon>Bacteria</taxon>
        <taxon>Bacillati</taxon>
        <taxon>Cyanobacteriota</taxon>
        <taxon>Cyanophyceae</taxon>
        <taxon>Oscillatoriophycideae</taxon>
        <taxon>Chroococcales</taxon>
        <taxon>Microcystaceae</taxon>
        <taxon>Microcystis</taxon>
    </lineage>
</organism>
<comment type="function">
    <text evidence="1">Catalyzes the methylthiolation of an aspartic acid residue of ribosomal protein uS12.</text>
</comment>
<comment type="catalytic activity">
    <reaction evidence="1">
        <text>L-aspartate(89)-[ribosomal protein uS12]-hydrogen + (sulfur carrier)-SH + AH2 + 2 S-adenosyl-L-methionine = 3-methylsulfanyl-L-aspartate(89)-[ribosomal protein uS12]-hydrogen + (sulfur carrier)-H + 5'-deoxyadenosine + L-methionine + A + S-adenosyl-L-homocysteine + 2 H(+)</text>
        <dbReference type="Rhea" id="RHEA:37087"/>
        <dbReference type="Rhea" id="RHEA-COMP:10460"/>
        <dbReference type="Rhea" id="RHEA-COMP:10461"/>
        <dbReference type="Rhea" id="RHEA-COMP:14737"/>
        <dbReference type="Rhea" id="RHEA-COMP:14739"/>
        <dbReference type="ChEBI" id="CHEBI:13193"/>
        <dbReference type="ChEBI" id="CHEBI:15378"/>
        <dbReference type="ChEBI" id="CHEBI:17319"/>
        <dbReference type="ChEBI" id="CHEBI:17499"/>
        <dbReference type="ChEBI" id="CHEBI:29917"/>
        <dbReference type="ChEBI" id="CHEBI:29961"/>
        <dbReference type="ChEBI" id="CHEBI:57844"/>
        <dbReference type="ChEBI" id="CHEBI:57856"/>
        <dbReference type="ChEBI" id="CHEBI:59789"/>
        <dbReference type="ChEBI" id="CHEBI:64428"/>
        <dbReference type="ChEBI" id="CHEBI:73599"/>
        <dbReference type="EC" id="2.8.4.4"/>
    </reaction>
</comment>
<comment type="cofactor">
    <cofactor evidence="1">
        <name>[4Fe-4S] cluster</name>
        <dbReference type="ChEBI" id="CHEBI:49883"/>
    </cofactor>
    <text evidence="1">Binds 2 [4Fe-4S] clusters. One cluster is coordinated with 3 cysteines and an exchangeable S-adenosyl-L-methionine.</text>
</comment>
<comment type="subcellular location">
    <subcellularLocation>
        <location evidence="1">Cytoplasm</location>
    </subcellularLocation>
</comment>
<comment type="similarity">
    <text evidence="1">Belongs to the methylthiotransferase family. RimO subfamily.</text>
</comment>
<name>RIMO_MICAN</name>
<dbReference type="EC" id="2.8.4.4" evidence="1"/>
<dbReference type="EMBL" id="AP009552">
    <property type="protein sequence ID" value="BAG02717.1"/>
    <property type="molecule type" value="Genomic_DNA"/>
</dbReference>
<dbReference type="RefSeq" id="WP_012265912.1">
    <property type="nucleotide sequence ID" value="NC_010296.1"/>
</dbReference>
<dbReference type="SMR" id="B0JJS5"/>
<dbReference type="STRING" id="449447.MAE_28950"/>
<dbReference type="PaxDb" id="449447-MAE_28950"/>
<dbReference type="EnsemblBacteria" id="BAG02717">
    <property type="protein sequence ID" value="BAG02717"/>
    <property type="gene ID" value="MAE_28950"/>
</dbReference>
<dbReference type="KEGG" id="mar:MAE_28950"/>
<dbReference type="PATRIC" id="fig|449447.4.peg.2647"/>
<dbReference type="eggNOG" id="COG0621">
    <property type="taxonomic scope" value="Bacteria"/>
</dbReference>
<dbReference type="HOGENOM" id="CLU_018697_0_0_3"/>
<dbReference type="BioCyc" id="MAER449447:MAE_RS12640-MONOMER"/>
<dbReference type="Proteomes" id="UP000001510">
    <property type="component" value="Chromosome"/>
</dbReference>
<dbReference type="GO" id="GO:0005829">
    <property type="term" value="C:cytosol"/>
    <property type="evidence" value="ECO:0007669"/>
    <property type="project" value="TreeGrafter"/>
</dbReference>
<dbReference type="GO" id="GO:0051539">
    <property type="term" value="F:4 iron, 4 sulfur cluster binding"/>
    <property type="evidence" value="ECO:0007669"/>
    <property type="project" value="UniProtKB-UniRule"/>
</dbReference>
<dbReference type="GO" id="GO:0035599">
    <property type="term" value="F:aspartic acid methylthiotransferase activity"/>
    <property type="evidence" value="ECO:0007669"/>
    <property type="project" value="TreeGrafter"/>
</dbReference>
<dbReference type="GO" id="GO:0046872">
    <property type="term" value="F:metal ion binding"/>
    <property type="evidence" value="ECO:0007669"/>
    <property type="project" value="UniProtKB-KW"/>
</dbReference>
<dbReference type="GO" id="GO:0103039">
    <property type="term" value="F:protein methylthiotransferase activity"/>
    <property type="evidence" value="ECO:0007669"/>
    <property type="project" value="UniProtKB-EC"/>
</dbReference>
<dbReference type="GO" id="GO:0006400">
    <property type="term" value="P:tRNA modification"/>
    <property type="evidence" value="ECO:0007669"/>
    <property type="project" value="InterPro"/>
</dbReference>
<dbReference type="CDD" id="cd01335">
    <property type="entry name" value="Radical_SAM"/>
    <property type="match status" value="1"/>
</dbReference>
<dbReference type="FunFam" id="3.40.50.12160:FF:000002">
    <property type="entry name" value="Ribosomal protein S12 methylthiotransferase RimO"/>
    <property type="match status" value="1"/>
</dbReference>
<dbReference type="FunFam" id="3.80.30.20:FF:000001">
    <property type="entry name" value="tRNA-2-methylthio-N(6)-dimethylallyladenosine synthase 2"/>
    <property type="match status" value="1"/>
</dbReference>
<dbReference type="Gene3D" id="3.40.50.12160">
    <property type="entry name" value="Methylthiotransferase, N-terminal domain"/>
    <property type="match status" value="1"/>
</dbReference>
<dbReference type="Gene3D" id="2.40.50.140">
    <property type="entry name" value="Nucleic acid-binding proteins"/>
    <property type="match status" value="1"/>
</dbReference>
<dbReference type="Gene3D" id="3.80.30.20">
    <property type="entry name" value="tm_1862 like domain"/>
    <property type="match status" value="1"/>
</dbReference>
<dbReference type="HAMAP" id="MF_01865">
    <property type="entry name" value="MTTase_RimO"/>
    <property type="match status" value="1"/>
</dbReference>
<dbReference type="InterPro" id="IPR006638">
    <property type="entry name" value="Elp3/MiaA/NifB-like_rSAM"/>
</dbReference>
<dbReference type="InterPro" id="IPR005839">
    <property type="entry name" value="Methylthiotransferase"/>
</dbReference>
<dbReference type="InterPro" id="IPR020612">
    <property type="entry name" value="Methylthiotransferase_CS"/>
</dbReference>
<dbReference type="InterPro" id="IPR013848">
    <property type="entry name" value="Methylthiotransferase_N"/>
</dbReference>
<dbReference type="InterPro" id="IPR038135">
    <property type="entry name" value="Methylthiotransferase_N_sf"/>
</dbReference>
<dbReference type="InterPro" id="IPR012340">
    <property type="entry name" value="NA-bd_OB-fold"/>
</dbReference>
<dbReference type="InterPro" id="IPR005840">
    <property type="entry name" value="Ribosomal_uS12_MeSTrfase_RimO"/>
</dbReference>
<dbReference type="InterPro" id="IPR007197">
    <property type="entry name" value="rSAM"/>
</dbReference>
<dbReference type="InterPro" id="IPR023404">
    <property type="entry name" value="rSAM_horseshoe"/>
</dbReference>
<dbReference type="InterPro" id="IPR002792">
    <property type="entry name" value="TRAM_dom"/>
</dbReference>
<dbReference type="NCBIfam" id="TIGR01125">
    <property type="entry name" value="30S ribosomal protein S12 methylthiotransferase RimO"/>
    <property type="match status" value="1"/>
</dbReference>
<dbReference type="NCBIfam" id="TIGR00089">
    <property type="entry name" value="MiaB/RimO family radical SAM methylthiotransferase"/>
    <property type="match status" value="1"/>
</dbReference>
<dbReference type="PANTHER" id="PTHR43837">
    <property type="entry name" value="RIBOSOMAL PROTEIN S12 METHYLTHIOTRANSFERASE RIMO"/>
    <property type="match status" value="1"/>
</dbReference>
<dbReference type="PANTHER" id="PTHR43837:SF1">
    <property type="entry name" value="RIBOSOMAL PROTEIN US12 METHYLTHIOTRANSFERASE RIMO"/>
    <property type="match status" value="1"/>
</dbReference>
<dbReference type="Pfam" id="PF04055">
    <property type="entry name" value="Radical_SAM"/>
    <property type="match status" value="1"/>
</dbReference>
<dbReference type="Pfam" id="PF18693">
    <property type="entry name" value="TRAM_2"/>
    <property type="match status" value="1"/>
</dbReference>
<dbReference type="Pfam" id="PF00919">
    <property type="entry name" value="UPF0004"/>
    <property type="match status" value="1"/>
</dbReference>
<dbReference type="SFLD" id="SFLDG01082">
    <property type="entry name" value="B12-binding_domain_containing"/>
    <property type="match status" value="1"/>
</dbReference>
<dbReference type="SFLD" id="SFLDS00029">
    <property type="entry name" value="Radical_SAM"/>
    <property type="match status" value="1"/>
</dbReference>
<dbReference type="SFLD" id="SFLDF00274">
    <property type="entry name" value="ribosomal_protein_S12_methylth"/>
    <property type="match status" value="1"/>
</dbReference>
<dbReference type="SMART" id="SM00729">
    <property type="entry name" value="Elp3"/>
    <property type="match status" value="1"/>
</dbReference>
<dbReference type="SUPFAM" id="SSF102114">
    <property type="entry name" value="Radical SAM enzymes"/>
    <property type="match status" value="1"/>
</dbReference>
<dbReference type="PROSITE" id="PS51449">
    <property type="entry name" value="MTTASE_N"/>
    <property type="match status" value="1"/>
</dbReference>
<dbReference type="PROSITE" id="PS01278">
    <property type="entry name" value="MTTASE_RADICAL"/>
    <property type="match status" value="1"/>
</dbReference>
<dbReference type="PROSITE" id="PS51918">
    <property type="entry name" value="RADICAL_SAM"/>
    <property type="match status" value="1"/>
</dbReference>
<dbReference type="PROSITE" id="PS50926">
    <property type="entry name" value="TRAM"/>
    <property type="match status" value="1"/>
</dbReference>
<evidence type="ECO:0000255" key="1">
    <source>
        <dbReference type="HAMAP-Rule" id="MF_01865"/>
    </source>
</evidence>
<evidence type="ECO:0000255" key="2">
    <source>
        <dbReference type="PROSITE-ProRule" id="PRU01266"/>
    </source>
</evidence>
<sequence>MGNKPTIAISHLGCEKNRIDSEHMLGLLAKAGYPVDNDEELADYVIVNTCSFIQAAREESVRTLVELAEANKKIIISGCMAQHFQDELLTELPEAVAIVGTGDYQKIVEIVERVETGERVKEVSADPTFIADENLPRYRTTSEGVAYLRVAEGCDYRCAFCIIPQLRGDQRSRSIESIVAEARQLASQGVQELILISQITTNYGLDLYGEPKLAELLRALGEVDIPWIRVHYAYPTGLTPKVIEAIRETPNVLPYLDLPLQHSHPDILRGMNRPWQGRVNDGIIERIKQAIPNAVLRTTFIVGFPGETEEHFSHLLEFVKRHEFDHVGVFTFSAEEGTAAFDLPDPVPQAIMDERRERLMLTQQPISERKNQAYIGQTVDVLIEQENPETGELIGRSARFSPEVDGLVYVTGEAILGAIVQVRITAADTYDLYGEIV</sequence>
<reference key="1">
    <citation type="journal article" date="2007" name="DNA Res.">
        <title>Complete genomic structure of the bloom-forming toxic cyanobacterium Microcystis aeruginosa NIES-843.</title>
        <authorList>
            <person name="Kaneko T."/>
            <person name="Nakajima N."/>
            <person name="Okamoto S."/>
            <person name="Suzuki I."/>
            <person name="Tanabe Y."/>
            <person name="Tamaoki M."/>
            <person name="Nakamura Y."/>
            <person name="Kasai F."/>
            <person name="Watanabe A."/>
            <person name="Kawashima K."/>
            <person name="Kishida Y."/>
            <person name="Ono A."/>
            <person name="Shimizu Y."/>
            <person name="Takahashi C."/>
            <person name="Minami C."/>
            <person name="Fujishiro T."/>
            <person name="Kohara M."/>
            <person name="Katoh M."/>
            <person name="Nakazaki N."/>
            <person name="Nakayama S."/>
            <person name="Yamada M."/>
            <person name="Tabata S."/>
            <person name="Watanabe M.M."/>
        </authorList>
    </citation>
    <scope>NUCLEOTIDE SEQUENCE [LARGE SCALE GENOMIC DNA]</scope>
    <source>
        <strain>NIES-843 / IAM M-247</strain>
    </source>
</reference>